<accession>P9WEL4</accession>
<proteinExistence type="inferred from homology"/>
<gene>
    <name evidence="3" type="primary">avaM</name>
</gene>
<protein>
    <recommendedName>
        <fullName evidence="3">Ava biosynthesis cluster protein M</fullName>
    </recommendedName>
</protein>
<evidence type="ECO:0000255" key="1"/>
<evidence type="ECO:0000269" key="2">
    <source>
    </source>
</evidence>
<evidence type="ECO:0000303" key="3">
    <source>
    </source>
</evidence>
<evidence type="ECO:0000305" key="4"/>
<evidence type="ECO:0000305" key="5">
    <source>
    </source>
</evidence>
<feature type="signal peptide" evidence="1">
    <location>
        <begin position="1"/>
        <end position="15"/>
    </location>
</feature>
<feature type="chain" id="PRO_0000461008" description="Ava biosynthesis cluster protein M">
    <location>
        <begin position="16"/>
        <end position="260"/>
    </location>
</feature>
<dbReference type="EMBL" id="OP596311">
    <property type="protein sequence ID" value="UZP48225.1"/>
    <property type="molecule type" value="Genomic_DNA"/>
</dbReference>
<dbReference type="SMR" id="P9WEL4"/>
<dbReference type="Gene3D" id="3.40.50.300">
    <property type="entry name" value="P-loop containing nucleotide triphosphate hydrolases"/>
    <property type="match status" value="1"/>
</dbReference>
<dbReference type="InterPro" id="IPR027417">
    <property type="entry name" value="P-loop_NTPase"/>
</dbReference>
<dbReference type="InterPro" id="IPR040632">
    <property type="entry name" value="Sulfotransfer_4"/>
</dbReference>
<dbReference type="PANTHER" id="PTHR36978:SF4">
    <property type="entry name" value="P-LOOP CONTAINING NUCLEOSIDE TRIPHOSPHATE HYDROLASE PROTEIN"/>
    <property type="match status" value="1"/>
</dbReference>
<dbReference type="PANTHER" id="PTHR36978">
    <property type="entry name" value="P-LOOP CONTAINING NUCLEOTIDE TRIPHOSPHATE HYDROLASE"/>
    <property type="match status" value="1"/>
</dbReference>
<dbReference type="Pfam" id="PF17784">
    <property type="entry name" value="Sulfotransfer_4"/>
    <property type="match status" value="1"/>
</dbReference>
<dbReference type="SUPFAM" id="SSF52540">
    <property type="entry name" value="P-loop containing nucleoside triphosphate hydrolases"/>
    <property type="match status" value="1"/>
</dbReference>
<organism>
    <name type="scientific">Aspergillus versicolor</name>
    <dbReference type="NCBI Taxonomy" id="46472"/>
    <lineage>
        <taxon>Eukaryota</taxon>
        <taxon>Fungi</taxon>
        <taxon>Dikarya</taxon>
        <taxon>Ascomycota</taxon>
        <taxon>Pezizomycotina</taxon>
        <taxon>Eurotiomycetes</taxon>
        <taxon>Eurotiomycetidae</taxon>
        <taxon>Eurotiales</taxon>
        <taxon>Aspergillaceae</taxon>
        <taxon>Aspergillus</taxon>
        <taxon>Aspergillus subgen. Nidulantes</taxon>
    </lineage>
</organism>
<reference key="1">
    <citation type="journal article" date="2023" name="Nat. Chem. Biol.">
        <title>Genome mining for unknown-unknown natural products.</title>
        <authorList>
            <person name="Yee D.A."/>
            <person name="Niwa K."/>
            <person name="Perlatti B."/>
            <person name="Chen M."/>
            <person name="Li Y."/>
            <person name="Tang Y."/>
        </authorList>
    </citation>
    <scope>NUCLEOTIDE SEQUENCE [GENOMIC DNA]</scope>
    <scope>FUNCTION</scope>
    <source>
        <strain>dI-29</strain>
    </source>
</reference>
<comment type="function">
    <text evidence="2">Part of the cluster that mediates the biosynthesis of a highly modified cyclo-arginine-tryptophan dipeptide (cRW) (PubMed:36702957). The first step of the pathway is perfornmed by the arginine-containing cyclodipeptide synthase (RCPDS) avaA that acts as the scaffold-generating enzyme and is responsible for formation of the cyclo-Arg-Trp (cRW) diketopiperazine. AvaB then acts as a multifunctional flavoenzyme that is responsible for generating the cyclo-Arg-formylkynurenine DKP, which can be deformylated by avaC. AvaB then further catalyzes an additional N-oxidation followed by cyclization and dehydration. The next step is an N-acetylation of the guanidine group catalyzed by the arginine N-acetyltransferase avaD. The roles of the additional enzymes identified within the ava cluster still have to be determined (PubMed:36702957).</text>
</comment>
<comment type="pathway">
    <text evidence="5">Secondary metabolite biosynthesis.</text>
</comment>
<comment type="similarity">
    <text evidence="4">Belongs to the cytochrome P450 family.</text>
</comment>
<sequence length="260" mass="30241">MKVLVLGLCRTGTSSLYVAQKELGMKPYHFRDIAFNTEHMKLWLTAMRAKFDGVGKPFQGKDFDQMLGEYDSVADTPACFFVEELLAAYPEAKVILTTRSPQSWLHSMQNTLITVISWRSWTVLSLFDREHSAFYWPLFNRIMRVMAKGNDPWKASATPSYLEYFDEHYTKVRRLVPKDRLLEWHPSQGWEPVCEFLDFPVPEKEFPHICTSDGNVRTHRSTYWKRWRNVVQKGAQTVGLVGLTVGGIWYFRSRLVGSSR</sequence>
<name>AVAM_ASPVE</name>
<keyword id="KW-0732">Signal</keyword>